<reference key="1">
    <citation type="journal article" date="2000" name="Nature">
        <title>Complete genome sequence of Pseudomonas aeruginosa PAO1, an opportunistic pathogen.</title>
        <authorList>
            <person name="Stover C.K."/>
            <person name="Pham X.-Q.T."/>
            <person name="Erwin A.L."/>
            <person name="Mizoguchi S.D."/>
            <person name="Warrener P."/>
            <person name="Hickey M.J."/>
            <person name="Brinkman F.S.L."/>
            <person name="Hufnagle W.O."/>
            <person name="Kowalik D.J."/>
            <person name="Lagrou M."/>
            <person name="Garber R.L."/>
            <person name="Goltry L."/>
            <person name="Tolentino E."/>
            <person name="Westbrock-Wadman S."/>
            <person name="Yuan Y."/>
            <person name="Brody L.L."/>
            <person name="Coulter S.N."/>
            <person name="Folger K.R."/>
            <person name="Kas A."/>
            <person name="Larbig K."/>
            <person name="Lim R.M."/>
            <person name="Smith K.A."/>
            <person name="Spencer D.H."/>
            <person name="Wong G.K.-S."/>
            <person name="Wu Z."/>
            <person name="Paulsen I.T."/>
            <person name="Reizer J."/>
            <person name="Saier M.H. Jr."/>
            <person name="Hancock R.E.W."/>
            <person name="Lory S."/>
            <person name="Olson M.V."/>
        </authorList>
    </citation>
    <scope>NUCLEOTIDE SEQUENCE [LARGE SCALE GENOMIC DNA]</scope>
    <source>
        <strain>ATCC 15692 / DSM 22644 / CIP 104116 / JCM 14847 / LMG 12228 / 1C / PRS 101 / PAO1</strain>
    </source>
</reference>
<sequence length="747" mass="83930">MQAAKPLFDYPKYWAECFGPAPFLPMSREEMDQLGWDSCDIIIVTGDAYVDHPSFGMAIIGRLLEAQGFRVGIIAQPDWQSKDDFMKLGEPNLFFGVAAGNMDSMINRYTADKKVRSDDAYTPGGLAGKRPDRASLVYSQRCKEAYSHVPVILGGIEASLRRIAHYDYWQDKVRRSILMDATADILLYGNAERAVVEIAQRLAQGELVSAITDVRGTAFVRRDTPEGWFEIDSTRIDRPGKIDKIINPYVNTQDTAACAIEQEKGAQEDPQEAKVVQLLANPRLTREKTVIRLPSFEKVRNDPVLYAHANRVLHLETNPGNARALVQKHGEVDVWFNPPPIPMSTEEMDYVFGMPYARVPHPAYGKAKIPAYEMIRFSVNIMRGCFGGCTFCSITEHEGRIIQNRSHDSIIREIEEMRDKVPGFTGVVSDLGGPTANMYRIACKSPDIERHCRKPSCVFPGICENLDTDHSSLIELYRKARALPGVKKILIASGLRYDLAVESPEYVKELVTHHVGGYLKIAPEHTERGPLDKMMKPGIGTYDRFKQMFEKFSKEAGKEQYLIPYFIAAHPGTTDEDMMNLALWLKRNGFRADQVQAFYPSPMATATAMYHSGKNPLRKVTYKSDGVTIVKSDQQRRLHKAFLRYHDPKGWPLLREALERMGRADLIGNGKHHLVPTYQPDTGEYQSARRKNSTPAGSKKAGKLLTQHTGLPPRASDGGKPWSKGQQNKATAFAKGKKKSRQPNIPR</sequence>
<organism>
    <name type="scientific">Pseudomonas aeruginosa (strain ATCC 15692 / DSM 22644 / CIP 104116 / JCM 14847 / LMG 12228 / 1C / PRS 101 / PAO1)</name>
    <dbReference type="NCBI Taxonomy" id="208964"/>
    <lineage>
        <taxon>Bacteria</taxon>
        <taxon>Pseudomonadati</taxon>
        <taxon>Pseudomonadota</taxon>
        <taxon>Gammaproteobacteria</taxon>
        <taxon>Pseudomonadales</taxon>
        <taxon>Pseudomonadaceae</taxon>
        <taxon>Pseudomonas</taxon>
    </lineage>
</organism>
<proteinExistence type="inferred from homology"/>
<feature type="chain" id="PRO_0000076389" description="UPF0313 protein PA4928">
    <location>
        <begin position="1"/>
        <end position="747"/>
    </location>
</feature>
<feature type="domain" description="Radical SAM core" evidence="2">
    <location>
        <begin position="371"/>
        <end position="640"/>
    </location>
</feature>
<feature type="region of interest" description="Disordered" evidence="3">
    <location>
        <begin position="670"/>
        <end position="747"/>
    </location>
</feature>
<feature type="binding site" evidence="1">
    <location>
        <position position="385"/>
    </location>
    <ligand>
        <name>[4Fe-4S] cluster</name>
        <dbReference type="ChEBI" id="CHEBI:49883"/>
        <note>4Fe-4S-S-AdoMet</note>
    </ligand>
</feature>
<feature type="binding site" evidence="1">
    <location>
        <position position="389"/>
    </location>
    <ligand>
        <name>[4Fe-4S] cluster</name>
        <dbReference type="ChEBI" id="CHEBI:49883"/>
        <note>4Fe-4S-S-AdoMet</note>
    </ligand>
</feature>
<feature type="binding site" evidence="1">
    <location>
        <position position="392"/>
    </location>
    <ligand>
        <name>[4Fe-4S] cluster</name>
        <dbReference type="ChEBI" id="CHEBI:49883"/>
        <note>4Fe-4S-S-AdoMet</note>
    </ligand>
</feature>
<gene>
    <name type="ordered locus">PA4928</name>
</gene>
<accession>Q9HUN6</accession>
<keyword id="KW-0004">4Fe-4S</keyword>
<keyword id="KW-0408">Iron</keyword>
<keyword id="KW-0411">Iron-sulfur</keyword>
<keyword id="KW-0479">Metal-binding</keyword>
<keyword id="KW-1185">Reference proteome</keyword>
<keyword id="KW-0949">S-adenosyl-L-methionine</keyword>
<comment type="cofactor">
    <cofactor evidence="1">
        <name>[4Fe-4S] cluster</name>
        <dbReference type="ChEBI" id="CHEBI:49883"/>
    </cofactor>
    <text evidence="1">Binds 1 [4Fe-4S] cluster. The cluster is coordinated with 3 cysteines and an exchangeable S-adenosyl-L-methionine.</text>
</comment>
<comment type="similarity">
    <text evidence="1">Belongs to the UPF0313 family.</text>
</comment>
<dbReference type="EMBL" id="AE004091">
    <property type="protein sequence ID" value="AAG08313.1"/>
    <property type="molecule type" value="Genomic_DNA"/>
</dbReference>
<dbReference type="PIR" id="B83029">
    <property type="entry name" value="B83029"/>
</dbReference>
<dbReference type="RefSeq" id="NP_253615.1">
    <property type="nucleotide sequence ID" value="NC_002516.2"/>
</dbReference>
<dbReference type="RefSeq" id="WP_003100007.1">
    <property type="nucleotide sequence ID" value="NZ_QZGE01000002.1"/>
</dbReference>
<dbReference type="SMR" id="Q9HUN6"/>
<dbReference type="FunCoup" id="Q9HUN6">
    <property type="interactions" value="28"/>
</dbReference>
<dbReference type="STRING" id="208964.PA4928"/>
<dbReference type="PaxDb" id="208964-PA4928"/>
<dbReference type="GeneID" id="879696"/>
<dbReference type="KEGG" id="pae:PA4928"/>
<dbReference type="PATRIC" id="fig|208964.12.peg.5161"/>
<dbReference type="PseudoCAP" id="PA4928"/>
<dbReference type="HOGENOM" id="CLU_018288_2_0_6"/>
<dbReference type="InParanoid" id="Q9HUN6"/>
<dbReference type="OrthoDB" id="9803479at2"/>
<dbReference type="PhylomeDB" id="Q9HUN6"/>
<dbReference type="BioCyc" id="PAER208964:G1FZ6-5042-MONOMER"/>
<dbReference type="Proteomes" id="UP000002438">
    <property type="component" value="Chromosome"/>
</dbReference>
<dbReference type="GO" id="GO:0051539">
    <property type="term" value="F:4 iron, 4 sulfur cluster binding"/>
    <property type="evidence" value="ECO:0007669"/>
    <property type="project" value="UniProtKB-KW"/>
</dbReference>
<dbReference type="GO" id="GO:0003824">
    <property type="term" value="F:catalytic activity"/>
    <property type="evidence" value="ECO:0007669"/>
    <property type="project" value="InterPro"/>
</dbReference>
<dbReference type="GO" id="GO:0005506">
    <property type="term" value="F:iron ion binding"/>
    <property type="evidence" value="ECO:0007669"/>
    <property type="project" value="UniProtKB-UniRule"/>
</dbReference>
<dbReference type="Gene3D" id="3.80.30.20">
    <property type="entry name" value="tm_1862 like domain"/>
    <property type="match status" value="1"/>
</dbReference>
<dbReference type="HAMAP" id="MF_01251">
    <property type="entry name" value="UPF0313"/>
    <property type="match status" value="1"/>
</dbReference>
<dbReference type="InterPro" id="IPR006638">
    <property type="entry name" value="Elp3/MiaA/NifB-like_rSAM"/>
</dbReference>
<dbReference type="InterPro" id="IPR020612">
    <property type="entry name" value="Methylthiotransferase_CS"/>
</dbReference>
<dbReference type="InterPro" id="IPR007197">
    <property type="entry name" value="rSAM"/>
</dbReference>
<dbReference type="InterPro" id="IPR023404">
    <property type="entry name" value="rSAM_horseshoe"/>
</dbReference>
<dbReference type="InterPro" id="IPR022946">
    <property type="entry name" value="UPF0313"/>
</dbReference>
<dbReference type="InterPro" id="IPR024560">
    <property type="entry name" value="UPF0313_C"/>
</dbReference>
<dbReference type="InterPro" id="IPR013704">
    <property type="entry name" value="UPF0313_N"/>
</dbReference>
<dbReference type="NCBIfam" id="TIGR03904">
    <property type="entry name" value="SAM_YgiQ"/>
    <property type="match status" value="1"/>
</dbReference>
<dbReference type="PANTHER" id="PTHR32331">
    <property type="entry name" value="UPF0313 PROTEIN YGIQ"/>
    <property type="match status" value="1"/>
</dbReference>
<dbReference type="PANTHER" id="PTHR32331:SF0">
    <property type="entry name" value="UPF0313 PROTEIN YGIQ"/>
    <property type="match status" value="1"/>
</dbReference>
<dbReference type="Pfam" id="PF11842">
    <property type="entry name" value="DUF3362"/>
    <property type="match status" value="1"/>
</dbReference>
<dbReference type="Pfam" id="PF04055">
    <property type="entry name" value="Radical_SAM"/>
    <property type="match status" value="1"/>
</dbReference>
<dbReference type="Pfam" id="PF08497">
    <property type="entry name" value="Radical_SAM_N"/>
    <property type="match status" value="1"/>
</dbReference>
<dbReference type="SFLD" id="SFLDG01082">
    <property type="entry name" value="B12-binding_domain_containing"/>
    <property type="match status" value="1"/>
</dbReference>
<dbReference type="SFLD" id="SFLDS00029">
    <property type="entry name" value="Radical_SAM"/>
    <property type="match status" value="1"/>
</dbReference>
<dbReference type="SFLD" id="SFLDG01069">
    <property type="entry name" value="UPF0313"/>
    <property type="match status" value="1"/>
</dbReference>
<dbReference type="SMART" id="SM00729">
    <property type="entry name" value="Elp3"/>
    <property type="match status" value="1"/>
</dbReference>
<dbReference type="SUPFAM" id="SSF102114">
    <property type="entry name" value="Radical SAM enzymes"/>
    <property type="match status" value="1"/>
</dbReference>
<dbReference type="PROSITE" id="PS51918">
    <property type="entry name" value="RADICAL_SAM"/>
    <property type="match status" value="1"/>
</dbReference>
<protein>
    <recommendedName>
        <fullName evidence="1">UPF0313 protein PA4928</fullName>
    </recommendedName>
</protein>
<name>Y4928_PSEAE</name>
<evidence type="ECO:0000255" key="1">
    <source>
        <dbReference type="HAMAP-Rule" id="MF_01251"/>
    </source>
</evidence>
<evidence type="ECO:0000255" key="2">
    <source>
        <dbReference type="PROSITE-ProRule" id="PRU01266"/>
    </source>
</evidence>
<evidence type="ECO:0000256" key="3">
    <source>
        <dbReference type="SAM" id="MobiDB-lite"/>
    </source>
</evidence>